<feature type="chain" id="PRO_0000195567" description="ATP synthase protein 8">
    <location>
        <begin position="1"/>
        <end position="55"/>
    </location>
</feature>
<feature type="transmembrane region" description="Helical" evidence="2">
    <location>
        <begin position="4"/>
        <end position="24"/>
    </location>
</feature>
<comment type="function">
    <text evidence="1">Mitochondrial membrane ATP synthase (F(1)F(0) ATP synthase or Complex V) produces ATP from ADP in the presence of a proton gradient across the membrane which is generated by electron transport complexes of the respiratory chain. F-type ATPases consist of two structural domains, F(1) - containing the extramembraneous catalytic core and F(0) - containing the membrane proton channel, linked together by a central stalk and a peripheral stalk. During catalysis, ATP synthesis in the catalytic domain of F(1) is coupled via a rotary mechanism of the central stalk subunits to proton translocation. Part of the complex F(0) domain. Minor subunit located with subunit a in the membrane (By similarity).</text>
</comment>
<comment type="subunit">
    <text evidence="1">F-type ATPases have 2 components, CF(1) - the catalytic core - and CF(0) - the membrane proton channel.</text>
</comment>
<comment type="subcellular location">
    <subcellularLocation>
        <location>Mitochondrion membrane</location>
        <topology>Single-pass membrane protein</topology>
    </subcellularLocation>
</comment>
<comment type="similarity">
    <text evidence="3">Belongs to the ATPase protein 8 family.</text>
</comment>
<protein>
    <recommendedName>
        <fullName>ATP synthase protein 8</fullName>
    </recommendedName>
    <alternativeName>
        <fullName>A6L</fullName>
    </alternativeName>
    <alternativeName>
        <fullName>F-ATPase subunit 8</fullName>
    </alternativeName>
</protein>
<gene>
    <name type="primary">MT-ATP8</name>
    <name type="synonym">ATP8</name>
    <name type="synonym">ATPASE8</name>
    <name type="synonym">MTATP8</name>
</gene>
<keyword id="KW-0066">ATP synthesis</keyword>
<keyword id="KW-0138">CF(0)</keyword>
<keyword id="KW-0375">Hydrogen ion transport</keyword>
<keyword id="KW-0406">Ion transport</keyword>
<keyword id="KW-0472">Membrane</keyword>
<keyword id="KW-0496">Mitochondrion</keyword>
<keyword id="KW-0812">Transmembrane</keyword>
<keyword id="KW-1133">Transmembrane helix</keyword>
<keyword id="KW-0813">Transport</keyword>
<reference key="1">
    <citation type="journal article" date="1995" name="Genetics">
        <title>Complete sequence of a sea lamprey (Petromyzon marinus) mitochondrial genome: early establishment of the vertebrate genome organization.</title>
        <authorList>
            <person name="Lee W.J."/>
            <person name="Kocher T.D."/>
        </authorList>
    </citation>
    <scope>NUCLEOTIDE SEQUENCE [GENOMIC DNA]</scope>
</reference>
<proteinExistence type="inferred from homology"/>
<name>ATP8_PETMA</name>
<organism>
    <name type="scientific">Petromyzon marinus</name>
    <name type="common">Sea lamprey</name>
    <dbReference type="NCBI Taxonomy" id="7757"/>
    <lineage>
        <taxon>Eukaryota</taxon>
        <taxon>Metazoa</taxon>
        <taxon>Chordata</taxon>
        <taxon>Craniata</taxon>
        <taxon>Vertebrata</taxon>
        <taxon>Cyclostomata</taxon>
        <taxon>Hyperoartia</taxon>
        <taxon>Petromyzontiformes</taxon>
        <taxon>Petromyzontidae</taxon>
        <taxon>Petromyzon</taxon>
    </lineage>
</organism>
<accession>Q35537</accession>
<geneLocation type="mitochondrion"/>
<dbReference type="EMBL" id="U11880">
    <property type="protein sequence ID" value="AAB08742.1"/>
    <property type="molecule type" value="Genomic_DNA"/>
</dbReference>
<dbReference type="PIR" id="S55008">
    <property type="entry name" value="S55008"/>
</dbReference>
<dbReference type="RefSeq" id="NP_008152.1">
    <property type="nucleotide sequence ID" value="NC_001626.1"/>
</dbReference>
<dbReference type="SMR" id="Q35537"/>
<dbReference type="Ensembl" id="ENSPMAT00000014127.1">
    <property type="protein sequence ID" value="ENSPMAP00000011435.1"/>
    <property type="gene ID" value="ENSPMAG00000013100.1"/>
</dbReference>
<dbReference type="GeneID" id="807808"/>
<dbReference type="KEGG" id="pmrn:807808"/>
<dbReference type="CTD" id="4509"/>
<dbReference type="HOGENOM" id="CLU_212888_0_0_1"/>
<dbReference type="OrthoDB" id="8734014at2759"/>
<dbReference type="Proteomes" id="UP001318040">
    <property type="component" value="Mitochondrion MT"/>
</dbReference>
<dbReference type="GO" id="GO:0031966">
    <property type="term" value="C:mitochondrial membrane"/>
    <property type="evidence" value="ECO:0007669"/>
    <property type="project" value="UniProtKB-SubCell"/>
</dbReference>
<dbReference type="GO" id="GO:0045259">
    <property type="term" value="C:proton-transporting ATP synthase complex"/>
    <property type="evidence" value="ECO:0007669"/>
    <property type="project" value="UniProtKB-KW"/>
</dbReference>
<dbReference type="GO" id="GO:0015078">
    <property type="term" value="F:proton transmembrane transporter activity"/>
    <property type="evidence" value="ECO:0007669"/>
    <property type="project" value="InterPro"/>
</dbReference>
<dbReference type="GO" id="GO:0015986">
    <property type="term" value="P:proton motive force-driven ATP synthesis"/>
    <property type="evidence" value="ECO:0007669"/>
    <property type="project" value="InterPro"/>
</dbReference>
<dbReference type="InterPro" id="IPR001421">
    <property type="entry name" value="ATP8_metazoa"/>
</dbReference>
<dbReference type="InterPro" id="IPR050635">
    <property type="entry name" value="ATPase_protein_8"/>
</dbReference>
<dbReference type="PANTHER" id="PTHR39937">
    <property type="entry name" value="ATP SYNTHASE PROTEIN 8"/>
    <property type="match status" value="1"/>
</dbReference>
<dbReference type="PANTHER" id="PTHR39937:SF1">
    <property type="entry name" value="ATP SYNTHASE PROTEIN 8"/>
    <property type="match status" value="1"/>
</dbReference>
<dbReference type="Pfam" id="PF00895">
    <property type="entry name" value="ATP-synt_8"/>
    <property type="match status" value="1"/>
</dbReference>
<sequence>MPQLDPAPWFSMLTVSWLIIFLLIMPTILFYQPQNTISTKQVTKPKQSTWTWPWH</sequence>
<evidence type="ECO:0000250" key="1"/>
<evidence type="ECO:0000255" key="2"/>
<evidence type="ECO:0000305" key="3"/>